<accession>A7NR64</accession>
<name>RS10_ROSCS</name>
<organism>
    <name type="scientific">Roseiflexus castenholzii (strain DSM 13941 / HLO8)</name>
    <dbReference type="NCBI Taxonomy" id="383372"/>
    <lineage>
        <taxon>Bacteria</taxon>
        <taxon>Bacillati</taxon>
        <taxon>Chloroflexota</taxon>
        <taxon>Chloroflexia</taxon>
        <taxon>Chloroflexales</taxon>
        <taxon>Roseiflexineae</taxon>
        <taxon>Roseiflexaceae</taxon>
        <taxon>Roseiflexus</taxon>
    </lineage>
</organism>
<comment type="function">
    <text evidence="1">Involved in the binding of tRNA to the ribosomes.</text>
</comment>
<comment type="subunit">
    <text evidence="1">Part of the 30S ribosomal subunit.</text>
</comment>
<comment type="similarity">
    <text evidence="1">Belongs to the universal ribosomal protein uS10 family.</text>
</comment>
<sequence length="102" mass="11560">MAKQKVRIRLKAYDHKILDQSARQIVEAAERTGALVAGPVPLPTKIEKYSVIRSPFIDKDSQEQFEIRTHKRLIDVLDPSQQTINALMKLNLPAGVDIEIKL</sequence>
<proteinExistence type="inferred from homology"/>
<feature type="chain" id="PRO_1000081563" description="Small ribosomal subunit protein uS10">
    <location>
        <begin position="1"/>
        <end position="102"/>
    </location>
</feature>
<dbReference type="EMBL" id="CP000804">
    <property type="protein sequence ID" value="ABU60060.1"/>
    <property type="molecule type" value="Genomic_DNA"/>
</dbReference>
<dbReference type="RefSeq" id="WP_012122482.1">
    <property type="nucleotide sequence ID" value="NC_009767.1"/>
</dbReference>
<dbReference type="SMR" id="A7NR64"/>
<dbReference type="STRING" id="383372.Rcas_4027"/>
<dbReference type="KEGG" id="rca:Rcas_4027"/>
<dbReference type="eggNOG" id="COG0051">
    <property type="taxonomic scope" value="Bacteria"/>
</dbReference>
<dbReference type="HOGENOM" id="CLU_122625_1_3_0"/>
<dbReference type="OrthoDB" id="9804464at2"/>
<dbReference type="Proteomes" id="UP000000263">
    <property type="component" value="Chromosome"/>
</dbReference>
<dbReference type="GO" id="GO:1990904">
    <property type="term" value="C:ribonucleoprotein complex"/>
    <property type="evidence" value="ECO:0007669"/>
    <property type="project" value="UniProtKB-KW"/>
</dbReference>
<dbReference type="GO" id="GO:0005840">
    <property type="term" value="C:ribosome"/>
    <property type="evidence" value="ECO:0007669"/>
    <property type="project" value="UniProtKB-KW"/>
</dbReference>
<dbReference type="GO" id="GO:0003735">
    <property type="term" value="F:structural constituent of ribosome"/>
    <property type="evidence" value="ECO:0007669"/>
    <property type="project" value="InterPro"/>
</dbReference>
<dbReference type="GO" id="GO:0000049">
    <property type="term" value="F:tRNA binding"/>
    <property type="evidence" value="ECO:0007669"/>
    <property type="project" value="UniProtKB-UniRule"/>
</dbReference>
<dbReference type="GO" id="GO:0006412">
    <property type="term" value="P:translation"/>
    <property type="evidence" value="ECO:0007669"/>
    <property type="project" value="UniProtKB-UniRule"/>
</dbReference>
<dbReference type="FunFam" id="3.30.70.600:FF:000001">
    <property type="entry name" value="30S ribosomal protein S10"/>
    <property type="match status" value="1"/>
</dbReference>
<dbReference type="Gene3D" id="3.30.70.600">
    <property type="entry name" value="Ribosomal protein S10 domain"/>
    <property type="match status" value="1"/>
</dbReference>
<dbReference type="HAMAP" id="MF_00508">
    <property type="entry name" value="Ribosomal_uS10"/>
    <property type="match status" value="1"/>
</dbReference>
<dbReference type="InterPro" id="IPR001848">
    <property type="entry name" value="Ribosomal_uS10"/>
</dbReference>
<dbReference type="InterPro" id="IPR018268">
    <property type="entry name" value="Ribosomal_uS10_CS"/>
</dbReference>
<dbReference type="InterPro" id="IPR027486">
    <property type="entry name" value="Ribosomal_uS10_dom"/>
</dbReference>
<dbReference type="InterPro" id="IPR036838">
    <property type="entry name" value="Ribosomal_uS10_dom_sf"/>
</dbReference>
<dbReference type="NCBIfam" id="NF001861">
    <property type="entry name" value="PRK00596.1"/>
    <property type="match status" value="1"/>
</dbReference>
<dbReference type="NCBIfam" id="TIGR01049">
    <property type="entry name" value="rpsJ_bact"/>
    <property type="match status" value="1"/>
</dbReference>
<dbReference type="PANTHER" id="PTHR11700">
    <property type="entry name" value="30S RIBOSOMAL PROTEIN S10 FAMILY MEMBER"/>
    <property type="match status" value="1"/>
</dbReference>
<dbReference type="Pfam" id="PF00338">
    <property type="entry name" value="Ribosomal_S10"/>
    <property type="match status" value="1"/>
</dbReference>
<dbReference type="PRINTS" id="PR00971">
    <property type="entry name" value="RIBOSOMALS10"/>
</dbReference>
<dbReference type="SMART" id="SM01403">
    <property type="entry name" value="Ribosomal_S10"/>
    <property type="match status" value="1"/>
</dbReference>
<dbReference type="SUPFAM" id="SSF54999">
    <property type="entry name" value="Ribosomal protein S10"/>
    <property type="match status" value="1"/>
</dbReference>
<dbReference type="PROSITE" id="PS00361">
    <property type="entry name" value="RIBOSOMAL_S10"/>
    <property type="match status" value="1"/>
</dbReference>
<protein>
    <recommendedName>
        <fullName evidence="1">Small ribosomal subunit protein uS10</fullName>
    </recommendedName>
    <alternativeName>
        <fullName evidence="2">30S ribosomal protein S10</fullName>
    </alternativeName>
</protein>
<gene>
    <name evidence="1" type="primary">rpsJ</name>
    <name type="ordered locus">Rcas_4027</name>
</gene>
<reference key="1">
    <citation type="submission" date="2007-08" db="EMBL/GenBank/DDBJ databases">
        <title>Complete sequence of Roseiflexus castenholzii DSM 13941.</title>
        <authorList>
            <consortium name="US DOE Joint Genome Institute"/>
            <person name="Copeland A."/>
            <person name="Lucas S."/>
            <person name="Lapidus A."/>
            <person name="Barry K."/>
            <person name="Glavina del Rio T."/>
            <person name="Dalin E."/>
            <person name="Tice H."/>
            <person name="Pitluck S."/>
            <person name="Thompson L.S."/>
            <person name="Brettin T."/>
            <person name="Bruce D."/>
            <person name="Detter J.C."/>
            <person name="Han C."/>
            <person name="Tapia R."/>
            <person name="Schmutz J."/>
            <person name="Larimer F."/>
            <person name="Land M."/>
            <person name="Hauser L."/>
            <person name="Kyrpides N."/>
            <person name="Mikhailova N."/>
            <person name="Bryant D.A."/>
            <person name="Hanada S."/>
            <person name="Tsukatani Y."/>
            <person name="Richardson P."/>
        </authorList>
    </citation>
    <scope>NUCLEOTIDE SEQUENCE [LARGE SCALE GENOMIC DNA]</scope>
    <source>
        <strain>DSM 13941 / HLO8</strain>
    </source>
</reference>
<keyword id="KW-1185">Reference proteome</keyword>
<keyword id="KW-0687">Ribonucleoprotein</keyword>
<keyword id="KW-0689">Ribosomal protein</keyword>
<evidence type="ECO:0000255" key="1">
    <source>
        <dbReference type="HAMAP-Rule" id="MF_00508"/>
    </source>
</evidence>
<evidence type="ECO:0000305" key="2"/>